<reference key="1">
    <citation type="submission" date="2009-01" db="EMBL/GenBank/DDBJ databases">
        <title>Complete sequence of chromosome of Arthrobacter chlorophenolicus A6.</title>
        <authorList>
            <consortium name="US DOE Joint Genome Institute"/>
            <person name="Lucas S."/>
            <person name="Copeland A."/>
            <person name="Lapidus A."/>
            <person name="Glavina del Rio T."/>
            <person name="Tice H."/>
            <person name="Bruce D."/>
            <person name="Goodwin L."/>
            <person name="Pitluck S."/>
            <person name="Goltsman E."/>
            <person name="Clum A."/>
            <person name="Larimer F."/>
            <person name="Land M."/>
            <person name="Hauser L."/>
            <person name="Kyrpides N."/>
            <person name="Mikhailova N."/>
            <person name="Jansson J."/>
            <person name="Richardson P."/>
        </authorList>
    </citation>
    <scope>NUCLEOTIDE SEQUENCE [LARGE SCALE GENOMIC DNA]</scope>
    <source>
        <strain>ATCC 700700 / DSM 12829 / CIP 107037 / JCM 12360 / KCTC 9906 / NCIMB 13794 / A6</strain>
    </source>
</reference>
<accession>B8HGC9</accession>
<sequence length="401" mass="43685">MTERIVLAYSGGLDTSVAIGWIGEATGAEVIAVAVDVGQGGESLETIRQRALGCGAVEAYVADARDEFANEYAMPTLKANALYQGHYPLVSAISRPVIVKHLVKAAREFGATTVAHGCTGKGNDQVRFEVGIQTLGPDLKCIAPVRDLALTRDKAIAFAEEKGLPIETTKKNPYSIDQNVWGRAVETGYLEDIWNAPTKDIYDYTATPEFPPAPDEVTISFQAGVPVAIDGVKVSPLQAIQELNRRAGAQGVGRIDVVEDRLVGIKSREIYEAPGAMALITAHKHLEDITIEREQARFKATVGQRWAELVYDGQWFSPLKRSLDAFIEDTQKYVSGDIRMVLHGGQAIVNGRRSDTSLYDFDLATYDTGDTFDQSMARGFIELWGMSSKVASGRDLRVEGK</sequence>
<keyword id="KW-0028">Amino-acid biosynthesis</keyword>
<keyword id="KW-0055">Arginine biosynthesis</keyword>
<keyword id="KW-0067">ATP-binding</keyword>
<keyword id="KW-0963">Cytoplasm</keyword>
<keyword id="KW-0436">Ligase</keyword>
<keyword id="KW-0547">Nucleotide-binding</keyword>
<protein>
    <recommendedName>
        <fullName evidence="1">Argininosuccinate synthase</fullName>
        <ecNumber evidence="1">6.3.4.5</ecNumber>
    </recommendedName>
    <alternativeName>
        <fullName evidence="1">Citrulline--aspartate ligase</fullName>
    </alternativeName>
</protein>
<dbReference type="EC" id="6.3.4.5" evidence="1"/>
<dbReference type="EMBL" id="CP001341">
    <property type="protein sequence ID" value="ACL39491.1"/>
    <property type="molecule type" value="Genomic_DNA"/>
</dbReference>
<dbReference type="RefSeq" id="WP_015936712.1">
    <property type="nucleotide sequence ID" value="NC_011886.1"/>
</dbReference>
<dbReference type="SMR" id="B8HGC9"/>
<dbReference type="STRING" id="452863.Achl_1503"/>
<dbReference type="KEGG" id="ach:Achl_1503"/>
<dbReference type="eggNOG" id="COG0137">
    <property type="taxonomic scope" value="Bacteria"/>
</dbReference>
<dbReference type="HOGENOM" id="CLU_032784_4_2_11"/>
<dbReference type="OrthoDB" id="9801641at2"/>
<dbReference type="UniPathway" id="UPA00068">
    <property type="reaction ID" value="UER00113"/>
</dbReference>
<dbReference type="Proteomes" id="UP000002505">
    <property type="component" value="Chromosome"/>
</dbReference>
<dbReference type="GO" id="GO:0005737">
    <property type="term" value="C:cytoplasm"/>
    <property type="evidence" value="ECO:0007669"/>
    <property type="project" value="UniProtKB-SubCell"/>
</dbReference>
<dbReference type="GO" id="GO:0004055">
    <property type="term" value="F:argininosuccinate synthase activity"/>
    <property type="evidence" value="ECO:0007669"/>
    <property type="project" value="UniProtKB-UniRule"/>
</dbReference>
<dbReference type="GO" id="GO:0005524">
    <property type="term" value="F:ATP binding"/>
    <property type="evidence" value="ECO:0007669"/>
    <property type="project" value="UniProtKB-UniRule"/>
</dbReference>
<dbReference type="GO" id="GO:0000053">
    <property type="term" value="P:argininosuccinate metabolic process"/>
    <property type="evidence" value="ECO:0007669"/>
    <property type="project" value="TreeGrafter"/>
</dbReference>
<dbReference type="GO" id="GO:0006526">
    <property type="term" value="P:L-arginine biosynthetic process"/>
    <property type="evidence" value="ECO:0007669"/>
    <property type="project" value="UniProtKB-UniRule"/>
</dbReference>
<dbReference type="GO" id="GO:0000050">
    <property type="term" value="P:urea cycle"/>
    <property type="evidence" value="ECO:0007669"/>
    <property type="project" value="TreeGrafter"/>
</dbReference>
<dbReference type="CDD" id="cd01999">
    <property type="entry name" value="ASS"/>
    <property type="match status" value="1"/>
</dbReference>
<dbReference type="FunFam" id="3.40.50.620:FF:000038">
    <property type="entry name" value="Argininosuccinate synthase"/>
    <property type="match status" value="1"/>
</dbReference>
<dbReference type="FunFam" id="3.90.1260.10:FF:000007">
    <property type="entry name" value="Argininosuccinate synthase"/>
    <property type="match status" value="1"/>
</dbReference>
<dbReference type="Gene3D" id="3.90.1260.10">
    <property type="entry name" value="Argininosuccinate synthetase, chain A, domain 2"/>
    <property type="match status" value="1"/>
</dbReference>
<dbReference type="Gene3D" id="3.40.50.620">
    <property type="entry name" value="HUPs"/>
    <property type="match status" value="1"/>
</dbReference>
<dbReference type="Gene3D" id="1.20.5.470">
    <property type="entry name" value="Single helix bin"/>
    <property type="match status" value="1"/>
</dbReference>
<dbReference type="HAMAP" id="MF_00005">
    <property type="entry name" value="Arg_succ_synth_type1"/>
    <property type="match status" value="1"/>
</dbReference>
<dbReference type="InterPro" id="IPR048268">
    <property type="entry name" value="Arginosuc_syn_C"/>
</dbReference>
<dbReference type="InterPro" id="IPR048267">
    <property type="entry name" value="Arginosuc_syn_N"/>
</dbReference>
<dbReference type="InterPro" id="IPR001518">
    <property type="entry name" value="Arginosuc_synth"/>
</dbReference>
<dbReference type="InterPro" id="IPR018223">
    <property type="entry name" value="Arginosuc_synth_CS"/>
</dbReference>
<dbReference type="InterPro" id="IPR023434">
    <property type="entry name" value="Arginosuc_synth_type_1_subfam"/>
</dbReference>
<dbReference type="InterPro" id="IPR024074">
    <property type="entry name" value="AS_cat/multimer_dom_body"/>
</dbReference>
<dbReference type="InterPro" id="IPR014729">
    <property type="entry name" value="Rossmann-like_a/b/a_fold"/>
</dbReference>
<dbReference type="NCBIfam" id="TIGR00032">
    <property type="entry name" value="argG"/>
    <property type="match status" value="1"/>
</dbReference>
<dbReference type="NCBIfam" id="NF001770">
    <property type="entry name" value="PRK00509.1"/>
    <property type="match status" value="1"/>
</dbReference>
<dbReference type="PANTHER" id="PTHR11587">
    <property type="entry name" value="ARGININOSUCCINATE SYNTHASE"/>
    <property type="match status" value="1"/>
</dbReference>
<dbReference type="PANTHER" id="PTHR11587:SF2">
    <property type="entry name" value="ARGININOSUCCINATE SYNTHASE"/>
    <property type="match status" value="1"/>
</dbReference>
<dbReference type="Pfam" id="PF20979">
    <property type="entry name" value="Arginosuc_syn_C"/>
    <property type="match status" value="1"/>
</dbReference>
<dbReference type="Pfam" id="PF00764">
    <property type="entry name" value="Arginosuc_synth"/>
    <property type="match status" value="1"/>
</dbReference>
<dbReference type="SUPFAM" id="SSF52402">
    <property type="entry name" value="Adenine nucleotide alpha hydrolases-like"/>
    <property type="match status" value="1"/>
</dbReference>
<dbReference type="SUPFAM" id="SSF69864">
    <property type="entry name" value="Argininosuccinate synthetase, C-terminal domain"/>
    <property type="match status" value="1"/>
</dbReference>
<dbReference type="PROSITE" id="PS00564">
    <property type="entry name" value="ARGININOSUCCIN_SYN_1"/>
    <property type="match status" value="1"/>
</dbReference>
<dbReference type="PROSITE" id="PS00565">
    <property type="entry name" value="ARGININOSUCCIN_SYN_2"/>
    <property type="match status" value="1"/>
</dbReference>
<name>ASSY_PSECP</name>
<proteinExistence type="inferred from homology"/>
<gene>
    <name evidence="1" type="primary">argG</name>
    <name type="ordered locus">Achl_1503</name>
</gene>
<comment type="catalytic activity">
    <reaction evidence="1">
        <text>L-citrulline + L-aspartate + ATP = 2-(N(omega)-L-arginino)succinate + AMP + diphosphate + H(+)</text>
        <dbReference type="Rhea" id="RHEA:10932"/>
        <dbReference type="ChEBI" id="CHEBI:15378"/>
        <dbReference type="ChEBI" id="CHEBI:29991"/>
        <dbReference type="ChEBI" id="CHEBI:30616"/>
        <dbReference type="ChEBI" id="CHEBI:33019"/>
        <dbReference type="ChEBI" id="CHEBI:57472"/>
        <dbReference type="ChEBI" id="CHEBI:57743"/>
        <dbReference type="ChEBI" id="CHEBI:456215"/>
        <dbReference type="EC" id="6.3.4.5"/>
    </reaction>
</comment>
<comment type="pathway">
    <text evidence="1">Amino-acid biosynthesis; L-arginine biosynthesis; L-arginine from L-ornithine and carbamoyl phosphate: step 2/3.</text>
</comment>
<comment type="subunit">
    <text evidence="1">Homotetramer.</text>
</comment>
<comment type="subcellular location">
    <subcellularLocation>
        <location evidence="1">Cytoplasm</location>
    </subcellularLocation>
</comment>
<comment type="similarity">
    <text evidence="1">Belongs to the argininosuccinate synthase family. Type 1 subfamily.</text>
</comment>
<organism>
    <name type="scientific">Pseudarthrobacter chlorophenolicus (strain ATCC 700700 / DSM 12829 / CIP 107037 / JCM 12360 / KCTC 9906 / NCIMB 13794 / A6)</name>
    <name type="common">Arthrobacter chlorophenolicus</name>
    <dbReference type="NCBI Taxonomy" id="452863"/>
    <lineage>
        <taxon>Bacteria</taxon>
        <taxon>Bacillati</taxon>
        <taxon>Actinomycetota</taxon>
        <taxon>Actinomycetes</taxon>
        <taxon>Micrococcales</taxon>
        <taxon>Micrococcaceae</taxon>
        <taxon>Pseudarthrobacter</taxon>
    </lineage>
</organism>
<evidence type="ECO:0000255" key="1">
    <source>
        <dbReference type="HAMAP-Rule" id="MF_00005"/>
    </source>
</evidence>
<feature type="chain" id="PRO_1000191876" description="Argininosuccinate synthase">
    <location>
        <begin position="1"/>
        <end position="401"/>
    </location>
</feature>
<feature type="binding site" evidence="1">
    <location>
        <begin position="8"/>
        <end position="16"/>
    </location>
    <ligand>
        <name>ATP</name>
        <dbReference type="ChEBI" id="CHEBI:30616"/>
    </ligand>
</feature>
<feature type="binding site" evidence="1">
    <location>
        <position position="87"/>
    </location>
    <ligand>
        <name>L-citrulline</name>
        <dbReference type="ChEBI" id="CHEBI:57743"/>
    </ligand>
</feature>
<feature type="binding site" evidence="1">
    <location>
        <position position="117"/>
    </location>
    <ligand>
        <name>ATP</name>
        <dbReference type="ChEBI" id="CHEBI:30616"/>
    </ligand>
</feature>
<feature type="binding site" evidence="1">
    <location>
        <position position="119"/>
    </location>
    <ligand>
        <name>L-aspartate</name>
        <dbReference type="ChEBI" id="CHEBI:29991"/>
    </ligand>
</feature>
<feature type="binding site" evidence="1">
    <location>
        <position position="123"/>
    </location>
    <ligand>
        <name>L-aspartate</name>
        <dbReference type="ChEBI" id="CHEBI:29991"/>
    </ligand>
</feature>
<feature type="binding site" evidence="1">
    <location>
        <position position="123"/>
    </location>
    <ligand>
        <name>L-citrulline</name>
        <dbReference type="ChEBI" id="CHEBI:57743"/>
    </ligand>
</feature>
<feature type="binding site" evidence="1">
    <location>
        <position position="124"/>
    </location>
    <ligand>
        <name>L-aspartate</name>
        <dbReference type="ChEBI" id="CHEBI:29991"/>
    </ligand>
</feature>
<feature type="binding site" evidence="1">
    <location>
        <position position="127"/>
    </location>
    <ligand>
        <name>L-citrulline</name>
        <dbReference type="ChEBI" id="CHEBI:57743"/>
    </ligand>
</feature>
<feature type="binding site" evidence="1">
    <location>
        <position position="175"/>
    </location>
    <ligand>
        <name>L-citrulline</name>
        <dbReference type="ChEBI" id="CHEBI:57743"/>
    </ligand>
</feature>
<feature type="binding site" evidence="1">
    <location>
        <position position="259"/>
    </location>
    <ligand>
        <name>L-citrulline</name>
        <dbReference type="ChEBI" id="CHEBI:57743"/>
    </ligand>
</feature>
<feature type="binding site" evidence="1">
    <location>
        <position position="271"/>
    </location>
    <ligand>
        <name>L-citrulline</name>
        <dbReference type="ChEBI" id="CHEBI:57743"/>
    </ligand>
</feature>